<keyword id="KW-0312">Gluconeogenesis</keyword>
<keyword id="KW-0324">Glycolysis</keyword>
<keyword id="KW-0413">Isomerase</keyword>
<feature type="chain" id="PRO_0000179905" description="2,3-bisphosphoglycerate-dependent phosphoglycerate mutase">
    <location>
        <begin position="1"/>
        <end position="206"/>
    </location>
</feature>
<feature type="active site" description="Tele-phosphohistidine intermediate" evidence="1">
    <location>
        <position position="10"/>
    </location>
</feature>
<feature type="active site" description="Proton donor/acceptor" evidence="1">
    <location>
        <position position="88"/>
    </location>
</feature>
<feature type="binding site" evidence="1">
    <location>
        <begin position="9"/>
        <end position="16"/>
    </location>
    <ligand>
        <name>substrate</name>
    </ligand>
</feature>
<feature type="binding site" evidence="1">
    <location>
        <begin position="22"/>
        <end position="23"/>
    </location>
    <ligand>
        <name>substrate</name>
    </ligand>
</feature>
<feature type="binding site" evidence="1">
    <location>
        <position position="61"/>
    </location>
    <ligand>
        <name>substrate</name>
    </ligand>
</feature>
<feature type="binding site" evidence="1">
    <location>
        <begin position="88"/>
        <end position="91"/>
    </location>
    <ligand>
        <name>substrate</name>
    </ligand>
</feature>
<feature type="binding site" evidence="1">
    <location>
        <position position="99"/>
    </location>
    <ligand>
        <name>substrate</name>
    </ligand>
</feature>
<feature type="binding site" evidence="1">
    <location>
        <begin position="115"/>
        <end position="116"/>
    </location>
    <ligand>
        <name>substrate</name>
    </ligand>
</feature>
<feature type="binding site" evidence="1">
    <location>
        <begin position="159"/>
        <end position="160"/>
    </location>
    <ligand>
        <name>substrate</name>
    </ligand>
</feature>
<feature type="site" description="Transition state stabilizer" evidence="1">
    <location>
        <position position="158"/>
    </location>
</feature>
<accession>Q98DM0</accession>
<gene>
    <name evidence="1" type="primary">gpmA</name>
    <name type="ordered locus">mlr4643</name>
</gene>
<name>GPMA_RHILO</name>
<comment type="function">
    <text evidence="1">Catalyzes the interconversion of 2-phosphoglycerate and 3-phosphoglycerate.</text>
</comment>
<comment type="catalytic activity">
    <reaction evidence="1">
        <text>(2R)-2-phosphoglycerate = (2R)-3-phosphoglycerate</text>
        <dbReference type="Rhea" id="RHEA:15901"/>
        <dbReference type="ChEBI" id="CHEBI:58272"/>
        <dbReference type="ChEBI" id="CHEBI:58289"/>
        <dbReference type="EC" id="5.4.2.11"/>
    </reaction>
</comment>
<comment type="pathway">
    <text evidence="1">Carbohydrate degradation; glycolysis; pyruvate from D-glyceraldehyde 3-phosphate: step 3/5.</text>
</comment>
<comment type="subunit">
    <text evidence="1">Homodimer.</text>
</comment>
<comment type="similarity">
    <text evidence="1">Belongs to the phosphoglycerate mutase family. BPG-dependent PGAM subfamily.</text>
</comment>
<sequence length="206" mass="22742">MSRTLVLVRHGQSEWNLKNLFTGWRDVDLTEQGHAEAKAAGQKLKARGLKFDIAFTSALSRAQKTCQHILDAVGQSDLKTIRDQALNERDYGDLSGLNKDDARKKWGEEQVHVWRRSYDVSPPGGESLKDTGARVWPYYLHDLQPHVLRGGTVLVAAHGNSLRALIMALDGKSGEEIVKLELGTGVPVIYQLNADSTVASKEVLEG</sequence>
<dbReference type="EC" id="5.4.2.11" evidence="1"/>
<dbReference type="EMBL" id="BA000012">
    <property type="protein sequence ID" value="BAB51251.1"/>
    <property type="molecule type" value="Genomic_DNA"/>
</dbReference>
<dbReference type="RefSeq" id="WP_010912593.1">
    <property type="nucleotide sequence ID" value="NC_002678.2"/>
</dbReference>
<dbReference type="SMR" id="Q98DM0"/>
<dbReference type="KEGG" id="mlo:mlr4643"/>
<dbReference type="eggNOG" id="COG0588">
    <property type="taxonomic scope" value="Bacteria"/>
</dbReference>
<dbReference type="HOGENOM" id="CLU_033323_1_4_5"/>
<dbReference type="UniPathway" id="UPA00109">
    <property type="reaction ID" value="UER00186"/>
</dbReference>
<dbReference type="Proteomes" id="UP000000552">
    <property type="component" value="Chromosome"/>
</dbReference>
<dbReference type="GO" id="GO:0004619">
    <property type="term" value="F:phosphoglycerate mutase activity"/>
    <property type="evidence" value="ECO:0007669"/>
    <property type="project" value="UniProtKB-EC"/>
</dbReference>
<dbReference type="GO" id="GO:0006094">
    <property type="term" value="P:gluconeogenesis"/>
    <property type="evidence" value="ECO:0007669"/>
    <property type="project" value="UniProtKB-UniRule"/>
</dbReference>
<dbReference type="GO" id="GO:0006096">
    <property type="term" value="P:glycolytic process"/>
    <property type="evidence" value="ECO:0007669"/>
    <property type="project" value="UniProtKB-UniRule"/>
</dbReference>
<dbReference type="CDD" id="cd07067">
    <property type="entry name" value="HP_PGM_like"/>
    <property type="match status" value="1"/>
</dbReference>
<dbReference type="Gene3D" id="3.40.50.1240">
    <property type="entry name" value="Phosphoglycerate mutase-like"/>
    <property type="match status" value="1"/>
</dbReference>
<dbReference type="HAMAP" id="MF_01039">
    <property type="entry name" value="PGAM_GpmA"/>
    <property type="match status" value="1"/>
</dbReference>
<dbReference type="InterPro" id="IPR013078">
    <property type="entry name" value="His_Pase_superF_clade-1"/>
</dbReference>
<dbReference type="InterPro" id="IPR029033">
    <property type="entry name" value="His_PPase_superfam"/>
</dbReference>
<dbReference type="InterPro" id="IPR001345">
    <property type="entry name" value="PG/BPGM_mutase_AS"/>
</dbReference>
<dbReference type="InterPro" id="IPR005952">
    <property type="entry name" value="Phosphogly_mut1"/>
</dbReference>
<dbReference type="NCBIfam" id="TIGR01258">
    <property type="entry name" value="pgm_1"/>
    <property type="match status" value="1"/>
</dbReference>
<dbReference type="NCBIfam" id="NF002339">
    <property type="entry name" value="PRK01295.1"/>
    <property type="match status" value="1"/>
</dbReference>
<dbReference type="PANTHER" id="PTHR11931">
    <property type="entry name" value="PHOSPHOGLYCERATE MUTASE"/>
    <property type="match status" value="1"/>
</dbReference>
<dbReference type="Pfam" id="PF00300">
    <property type="entry name" value="His_Phos_1"/>
    <property type="match status" value="1"/>
</dbReference>
<dbReference type="PIRSF" id="PIRSF000709">
    <property type="entry name" value="6PFK_2-Ptase"/>
    <property type="match status" value="1"/>
</dbReference>
<dbReference type="SMART" id="SM00855">
    <property type="entry name" value="PGAM"/>
    <property type="match status" value="1"/>
</dbReference>
<dbReference type="SUPFAM" id="SSF53254">
    <property type="entry name" value="Phosphoglycerate mutase-like"/>
    <property type="match status" value="1"/>
</dbReference>
<dbReference type="PROSITE" id="PS00175">
    <property type="entry name" value="PG_MUTASE"/>
    <property type="match status" value="1"/>
</dbReference>
<proteinExistence type="inferred from homology"/>
<organism>
    <name type="scientific">Mesorhizobium japonicum (strain LMG 29417 / CECT 9101 / MAFF 303099)</name>
    <name type="common">Mesorhizobium loti (strain MAFF 303099)</name>
    <dbReference type="NCBI Taxonomy" id="266835"/>
    <lineage>
        <taxon>Bacteria</taxon>
        <taxon>Pseudomonadati</taxon>
        <taxon>Pseudomonadota</taxon>
        <taxon>Alphaproteobacteria</taxon>
        <taxon>Hyphomicrobiales</taxon>
        <taxon>Phyllobacteriaceae</taxon>
        <taxon>Mesorhizobium</taxon>
    </lineage>
</organism>
<evidence type="ECO:0000255" key="1">
    <source>
        <dbReference type="HAMAP-Rule" id="MF_01039"/>
    </source>
</evidence>
<protein>
    <recommendedName>
        <fullName evidence="1">2,3-bisphosphoglycerate-dependent phosphoglycerate mutase</fullName>
        <shortName evidence="1">BPG-dependent PGAM</shortName>
        <shortName evidence="1">PGAM</shortName>
        <shortName evidence="1">Phosphoglyceromutase</shortName>
        <shortName evidence="1">dPGM</shortName>
        <ecNumber evidence="1">5.4.2.11</ecNumber>
    </recommendedName>
</protein>
<reference key="1">
    <citation type="journal article" date="2000" name="DNA Res.">
        <title>Complete genome structure of the nitrogen-fixing symbiotic bacterium Mesorhizobium loti.</title>
        <authorList>
            <person name="Kaneko T."/>
            <person name="Nakamura Y."/>
            <person name="Sato S."/>
            <person name="Asamizu E."/>
            <person name="Kato T."/>
            <person name="Sasamoto S."/>
            <person name="Watanabe A."/>
            <person name="Idesawa K."/>
            <person name="Ishikawa A."/>
            <person name="Kawashima K."/>
            <person name="Kimura T."/>
            <person name="Kishida Y."/>
            <person name="Kiyokawa C."/>
            <person name="Kohara M."/>
            <person name="Matsumoto M."/>
            <person name="Matsuno A."/>
            <person name="Mochizuki Y."/>
            <person name="Nakayama S."/>
            <person name="Nakazaki N."/>
            <person name="Shimpo S."/>
            <person name="Sugimoto M."/>
            <person name="Takeuchi C."/>
            <person name="Yamada M."/>
            <person name="Tabata S."/>
        </authorList>
    </citation>
    <scope>NUCLEOTIDE SEQUENCE [LARGE SCALE GENOMIC DNA]</scope>
    <source>
        <strain>LMG 29417 / CECT 9101 / MAFF 303099</strain>
    </source>
</reference>